<comment type="function">
    <text evidence="1">One of the essential components for the initiation of protein synthesis. Stabilizes the binding of IF-2 and IF-3 on the 30S subunit to which N-formylmethionyl-tRNA(fMet) subsequently binds. Helps modulate mRNA selection, yielding the 30S pre-initiation complex (PIC). Upon addition of the 50S ribosomal subunit IF-1, IF-2 and IF-3 are released leaving the mature 70S translation initiation complex.</text>
</comment>
<comment type="subunit">
    <text evidence="1">Component of the 30S ribosomal translation pre-initiation complex which assembles on the 30S ribosome in the order IF-2 and IF-3, IF-1 and N-formylmethionyl-tRNA(fMet); mRNA recruitment can occur at any time during PIC assembly.</text>
</comment>
<comment type="subcellular location">
    <subcellularLocation>
        <location evidence="1">Plastid</location>
        <location evidence="1">Chloroplast</location>
    </subcellularLocation>
</comment>
<comment type="similarity">
    <text evidence="1">Belongs to the IF-1 family.</text>
</comment>
<reference key="1">
    <citation type="journal article" date="2004" name="DNA Res.">
        <title>Complete nucleotide sequence of the sugarcane (Saccharum officinarum) chloroplast genome: a comparative analysis of four monocot chloroplast genomes.</title>
        <authorList>
            <person name="Asano T."/>
            <person name="Tsudzuki T."/>
            <person name="Takahashi S."/>
            <person name="Shimada H."/>
            <person name="Kadowaki K."/>
        </authorList>
    </citation>
    <scope>NUCLEOTIDE SEQUENCE [LARGE SCALE GENOMIC DNA]</scope>
</reference>
<name>IF1C_SACOF</name>
<evidence type="ECO:0000255" key="1">
    <source>
        <dbReference type="HAMAP-Rule" id="MF_00075"/>
    </source>
</evidence>
<evidence type="ECO:0000256" key="2">
    <source>
        <dbReference type="SAM" id="MobiDB-lite"/>
    </source>
</evidence>
<gene>
    <name evidence="1" type="primary">infA</name>
</gene>
<feature type="chain" id="PRO_0000095950" description="Translation initiation factor IF-1, chloroplastic">
    <location>
        <begin position="1"/>
        <end position="107"/>
    </location>
</feature>
<feature type="domain" description="S1-like" evidence="1">
    <location>
        <begin position="8"/>
        <end position="83"/>
    </location>
</feature>
<feature type="region of interest" description="Disordered" evidence="2">
    <location>
        <begin position="81"/>
        <end position="107"/>
    </location>
</feature>
<feature type="compositionally biased region" description="Basic and acidic residues" evidence="2">
    <location>
        <begin position="83"/>
        <end position="107"/>
    </location>
</feature>
<proteinExistence type="inferred from homology"/>
<sequence length="107" mass="12431">MTEKKNRREKKNPREAKVTFEGLVTEALPNGMFRVRLENDTIILGYISGKIRSSSIRILMGDRVKIEVSRYDSSKGRIIYRLPHKDSKRTEDSKDTEDLKDTKDSKD</sequence>
<protein>
    <recommendedName>
        <fullName evidence="1">Translation initiation factor IF-1, chloroplastic</fullName>
    </recommendedName>
</protein>
<organism>
    <name type="scientific">Saccharum officinarum</name>
    <name type="common">Sugarcane</name>
    <dbReference type="NCBI Taxonomy" id="4547"/>
    <lineage>
        <taxon>Eukaryota</taxon>
        <taxon>Viridiplantae</taxon>
        <taxon>Streptophyta</taxon>
        <taxon>Embryophyta</taxon>
        <taxon>Tracheophyta</taxon>
        <taxon>Spermatophyta</taxon>
        <taxon>Magnoliopsida</taxon>
        <taxon>Liliopsida</taxon>
        <taxon>Poales</taxon>
        <taxon>Poaceae</taxon>
        <taxon>PACMAD clade</taxon>
        <taxon>Panicoideae</taxon>
        <taxon>Andropogonodae</taxon>
        <taxon>Andropogoneae</taxon>
        <taxon>Saccharinae</taxon>
        <taxon>Saccharum</taxon>
        <taxon>Saccharum officinarum species complex</taxon>
    </lineage>
</organism>
<geneLocation type="chloroplast"/>
<dbReference type="EMBL" id="AP006714">
    <property type="protein sequence ID" value="BAD27327.1"/>
    <property type="molecule type" value="Genomic_DNA"/>
</dbReference>
<dbReference type="RefSeq" id="YP_009389605.1">
    <property type="nucleotide sequence ID" value="NC_035224.1"/>
</dbReference>
<dbReference type="SMR" id="Q6ENS9"/>
<dbReference type="GeneID" id="33347837"/>
<dbReference type="GO" id="GO:0009507">
    <property type="term" value="C:chloroplast"/>
    <property type="evidence" value="ECO:0007669"/>
    <property type="project" value="UniProtKB-SubCell"/>
</dbReference>
<dbReference type="GO" id="GO:0005829">
    <property type="term" value="C:cytosol"/>
    <property type="evidence" value="ECO:0007669"/>
    <property type="project" value="TreeGrafter"/>
</dbReference>
<dbReference type="GO" id="GO:0043022">
    <property type="term" value="F:ribosome binding"/>
    <property type="evidence" value="ECO:0007669"/>
    <property type="project" value="UniProtKB-UniRule"/>
</dbReference>
<dbReference type="GO" id="GO:0019843">
    <property type="term" value="F:rRNA binding"/>
    <property type="evidence" value="ECO:0007669"/>
    <property type="project" value="UniProtKB-UniRule"/>
</dbReference>
<dbReference type="GO" id="GO:0003743">
    <property type="term" value="F:translation initiation factor activity"/>
    <property type="evidence" value="ECO:0007669"/>
    <property type="project" value="UniProtKB-UniRule"/>
</dbReference>
<dbReference type="CDD" id="cd04451">
    <property type="entry name" value="S1_IF1"/>
    <property type="match status" value="1"/>
</dbReference>
<dbReference type="FunFam" id="2.40.50.140:FF:000019">
    <property type="entry name" value="Translation initiation factor IF-1, chloroplastic"/>
    <property type="match status" value="1"/>
</dbReference>
<dbReference type="Gene3D" id="2.40.50.140">
    <property type="entry name" value="Nucleic acid-binding proteins"/>
    <property type="match status" value="1"/>
</dbReference>
<dbReference type="HAMAP" id="MF_00075">
    <property type="entry name" value="IF_1"/>
    <property type="match status" value="1"/>
</dbReference>
<dbReference type="InterPro" id="IPR012340">
    <property type="entry name" value="NA-bd_OB-fold"/>
</dbReference>
<dbReference type="InterPro" id="IPR006196">
    <property type="entry name" value="RNA-binding_domain_S1_IF1"/>
</dbReference>
<dbReference type="InterPro" id="IPR003029">
    <property type="entry name" value="S1_domain"/>
</dbReference>
<dbReference type="InterPro" id="IPR004368">
    <property type="entry name" value="TIF_IF1"/>
</dbReference>
<dbReference type="NCBIfam" id="TIGR00008">
    <property type="entry name" value="infA"/>
    <property type="match status" value="1"/>
</dbReference>
<dbReference type="PANTHER" id="PTHR33370">
    <property type="entry name" value="TRANSLATION INITIATION FACTOR IF-1, CHLOROPLASTIC"/>
    <property type="match status" value="1"/>
</dbReference>
<dbReference type="PANTHER" id="PTHR33370:SF1">
    <property type="entry name" value="TRANSLATION INITIATION FACTOR IF-1, CHLOROPLASTIC"/>
    <property type="match status" value="1"/>
</dbReference>
<dbReference type="Pfam" id="PF01176">
    <property type="entry name" value="eIF-1a"/>
    <property type="match status" value="1"/>
</dbReference>
<dbReference type="SMART" id="SM00316">
    <property type="entry name" value="S1"/>
    <property type="match status" value="1"/>
</dbReference>
<dbReference type="SUPFAM" id="SSF50249">
    <property type="entry name" value="Nucleic acid-binding proteins"/>
    <property type="match status" value="1"/>
</dbReference>
<dbReference type="PROSITE" id="PS50832">
    <property type="entry name" value="S1_IF1_TYPE"/>
    <property type="match status" value="1"/>
</dbReference>
<keyword id="KW-0150">Chloroplast</keyword>
<keyword id="KW-0396">Initiation factor</keyword>
<keyword id="KW-0934">Plastid</keyword>
<keyword id="KW-0648">Protein biosynthesis</keyword>
<keyword id="KW-0694">RNA-binding</keyword>
<keyword id="KW-0699">rRNA-binding</keyword>
<accession>Q6ENS9</accession>